<accession>Q7D0Y8</accession>
<accession>Q8UHK9</accession>
<feature type="chain" id="PRO_0000157388" description="UPF0324 membrane protein Atu0671">
    <location>
        <begin position="1"/>
        <end position="347"/>
    </location>
</feature>
<feature type="transmembrane region" description="Helical" evidence="1">
    <location>
        <begin position="15"/>
        <end position="37"/>
    </location>
</feature>
<feature type="transmembrane region" description="Helical" evidence="1">
    <location>
        <begin position="50"/>
        <end position="72"/>
    </location>
</feature>
<feature type="transmembrane region" description="Helical" evidence="1">
    <location>
        <begin position="105"/>
        <end position="127"/>
    </location>
</feature>
<feature type="transmembrane region" description="Helical" evidence="1">
    <location>
        <begin position="140"/>
        <end position="162"/>
    </location>
</feature>
<feature type="transmembrane region" description="Helical" evidence="1">
    <location>
        <begin position="172"/>
        <end position="194"/>
    </location>
</feature>
<feature type="transmembrane region" description="Helical" evidence="1">
    <location>
        <begin position="201"/>
        <end position="223"/>
    </location>
</feature>
<feature type="transmembrane region" description="Helical" evidence="1">
    <location>
        <begin position="233"/>
        <end position="250"/>
    </location>
</feature>
<feature type="transmembrane region" description="Helical" evidence="1">
    <location>
        <begin position="263"/>
        <end position="282"/>
    </location>
</feature>
<feature type="transmembrane region" description="Helical" evidence="1">
    <location>
        <begin position="287"/>
        <end position="309"/>
    </location>
</feature>
<feature type="transmembrane region" description="Helical" evidence="1">
    <location>
        <begin position="322"/>
        <end position="344"/>
    </location>
</feature>
<proteinExistence type="inferred from homology"/>
<sequence>MAQHRTLAHPFQFSLRWLSPLLPGILICAAVSCAAILAERFQVRIAGHAWLGDLVLAILIGTLLRSLVSLPVVASAGIKFSAKTLLEIAVALLGASLSLSILKGAGGLLIGGIALIVALSLVFSYAAGRMLGLPPKLATLIACGNSICGNSAIAAAAPAIGAKPEDVAASIAFTAVLGVVAVLLMPFLPQLLGLDATQYGIFAGLTVYAVPQVLAATAPLGAVAVQTGTIVKLIRVLMLGPVIATLSVIHGQSGKGRLKLQQMVPWFIIGFVLMIMARSFGLIPEALLSPVASLSNILTIMSMAALGLSVDIRSLRHAGGKVIIAASLSLVLLGVLSFGLILLTQAA</sequence>
<organism>
    <name type="scientific">Agrobacterium fabrum (strain C58 / ATCC 33970)</name>
    <name type="common">Agrobacterium tumefaciens (strain C58)</name>
    <dbReference type="NCBI Taxonomy" id="176299"/>
    <lineage>
        <taxon>Bacteria</taxon>
        <taxon>Pseudomonadati</taxon>
        <taxon>Pseudomonadota</taxon>
        <taxon>Alphaproteobacteria</taxon>
        <taxon>Hyphomicrobiales</taxon>
        <taxon>Rhizobiaceae</taxon>
        <taxon>Rhizobium/Agrobacterium group</taxon>
        <taxon>Agrobacterium</taxon>
        <taxon>Agrobacterium tumefaciens complex</taxon>
    </lineage>
</organism>
<keyword id="KW-1003">Cell membrane</keyword>
<keyword id="KW-0472">Membrane</keyword>
<keyword id="KW-1185">Reference proteome</keyword>
<keyword id="KW-0812">Transmembrane</keyword>
<keyword id="KW-1133">Transmembrane helix</keyword>
<dbReference type="EMBL" id="AE007869">
    <property type="protein sequence ID" value="AAK86480.2"/>
    <property type="status" value="ALT_INIT"/>
    <property type="molecule type" value="Genomic_DNA"/>
</dbReference>
<dbReference type="PIR" id="AI2658">
    <property type="entry name" value="AI2658"/>
</dbReference>
<dbReference type="PIR" id="G97440">
    <property type="entry name" value="G97440"/>
</dbReference>
<dbReference type="RefSeq" id="NP_353695.2">
    <property type="nucleotide sequence ID" value="NC_003062.2"/>
</dbReference>
<dbReference type="RefSeq" id="WP_035256280.1">
    <property type="nucleotide sequence ID" value="NC_003062.2"/>
</dbReference>
<dbReference type="EnsemblBacteria" id="AAK86480">
    <property type="protein sequence ID" value="AAK86480"/>
    <property type="gene ID" value="Atu0671"/>
</dbReference>
<dbReference type="GeneID" id="1132709"/>
<dbReference type="KEGG" id="atu:Atu0671"/>
<dbReference type="PATRIC" id="fig|176299.10.peg.667"/>
<dbReference type="eggNOG" id="COG2855">
    <property type="taxonomic scope" value="Bacteria"/>
</dbReference>
<dbReference type="HOGENOM" id="CLU_033541_3_1_5"/>
<dbReference type="OrthoDB" id="5393513at2"/>
<dbReference type="Proteomes" id="UP000000813">
    <property type="component" value="Chromosome circular"/>
</dbReference>
<dbReference type="GO" id="GO:0005886">
    <property type="term" value="C:plasma membrane"/>
    <property type="evidence" value="ECO:0007669"/>
    <property type="project" value="UniProtKB-SubCell"/>
</dbReference>
<dbReference type="InterPro" id="IPR018383">
    <property type="entry name" value="UPF0324_pro"/>
</dbReference>
<dbReference type="PANTHER" id="PTHR30106">
    <property type="entry name" value="INNER MEMBRANE PROTEIN YEIH-RELATED"/>
    <property type="match status" value="1"/>
</dbReference>
<dbReference type="PANTHER" id="PTHR30106:SF2">
    <property type="entry name" value="UPF0324 INNER MEMBRANE PROTEIN YEIH"/>
    <property type="match status" value="1"/>
</dbReference>
<dbReference type="Pfam" id="PF03601">
    <property type="entry name" value="Cons_hypoth698"/>
    <property type="match status" value="1"/>
</dbReference>
<gene>
    <name type="ordered locus">Atu0671</name>
    <name type="ORF">AGR_C_1202</name>
</gene>
<comment type="subcellular location">
    <subcellularLocation>
        <location evidence="2">Cell membrane</location>
        <topology evidence="2">Multi-pass membrane protein</topology>
    </subcellularLocation>
</comment>
<comment type="similarity">
    <text evidence="2">Belongs to the UPF0324 family.</text>
</comment>
<comment type="sequence caution" evidence="2">
    <conflict type="erroneous initiation">
        <sequence resource="EMBL-CDS" id="AAK86480"/>
    </conflict>
</comment>
<reference key="1">
    <citation type="journal article" date="2001" name="Science">
        <title>The genome of the natural genetic engineer Agrobacterium tumefaciens C58.</title>
        <authorList>
            <person name="Wood D.W."/>
            <person name="Setubal J.C."/>
            <person name="Kaul R."/>
            <person name="Monks D.E."/>
            <person name="Kitajima J.P."/>
            <person name="Okura V.K."/>
            <person name="Zhou Y."/>
            <person name="Chen L."/>
            <person name="Wood G.E."/>
            <person name="Almeida N.F. Jr."/>
            <person name="Woo L."/>
            <person name="Chen Y."/>
            <person name="Paulsen I.T."/>
            <person name="Eisen J.A."/>
            <person name="Karp P.D."/>
            <person name="Bovee D. Sr."/>
            <person name="Chapman P."/>
            <person name="Clendenning J."/>
            <person name="Deatherage G."/>
            <person name="Gillet W."/>
            <person name="Grant C."/>
            <person name="Kutyavin T."/>
            <person name="Levy R."/>
            <person name="Li M.-J."/>
            <person name="McClelland E."/>
            <person name="Palmieri A."/>
            <person name="Raymond C."/>
            <person name="Rouse G."/>
            <person name="Saenphimmachak C."/>
            <person name="Wu Z."/>
            <person name="Romero P."/>
            <person name="Gordon D."/>
            <person name="Zhang S."/>
            <person name="Yoo H."/>
            <person name="Tao Y."/>
            <person name="Biddle P."/>
            <person name="Jung M."/>
            <person name="Krespan W."/>
            <person name="Perry M."/>
            <person name="Gordon-Kamm B."/>
            <person name="Liao L."/>
            <person name="Kim S."/>
            <person name="Hendrick C."/>
            <person name="Zhao Z.-Y."/>
            <person name="Dolan M."/>
            <person name="Chumley F."/>
            <person name="Tingey S.V."/>
            <person name="Tomb J.-F."/>
            <person name="Gordon M.P."/>
            <person name="Olson M.V."/>
            <person name="Nester E.W."/>
        </authorList>
    </citation>
    <scope>NUCLEOTIDE SEQUENCE [LARGE SCALE GENOMIC DNA]</scope>
    <source>
        <strain>C58 / ATCC 33970</strain>
    </source>
</reference>
<reference key="2">
    <citation type="journal article" date="2001" name="Science">
        <title>Genome sequence of the plant pathogen and biotechnology agent Agrobacterium tumefaciens C58.</title>
        <authorList>
            <person name="Goodner B."/>
            <person name="Hinkle G."/>
            <person name="Gattung S."/>
            <person name="Miller N."/>
            <person name="Blanchard M."/>
            <person name="Qurollo B."/>
            <person name="Goldman B.S."/>
            <person name="Cao Y."/>
            <person name="Askenazi M."/>
            <person name="Halling C."/>
            <person name="Mullin L."/>
            <person name="Houmiel K."/>
            <person name="Gordon J."/>
            <person name="Vaudin M."/>
            <person name="Iartchouk O."/>
            <person name="Epp A."/>
            <person name="Liu F."/>
            <person name="Wollam C."/>
            <person name="Allinger M."/>
            <person name="Doughty D."/>
            <person name="Scott C."/>
            <person name="Lappas C."/>
            <person name="Markelz B."/>
            <person name="Flanagan C."/>
            <person name="Crowell C."/>
            <person name="Gurson J."/>
            <person name="Lomo C."/>
            <person name="Sear C."/>
            <person name="Strub G."/>
            <person name="Cielo C."/>
            <person name="Slater S."/>
        </authorList>
    </citation>
    <scope>NUCLEOTIDE SEQUENCE [LARGE SCALE GENOMIC DNA]</scope>
    <source>
        <strain>C58 / ATCC 33970</strain>
    </source>
</reference>
<name>Y671_AGRFC</name>
<protein>
    <recommendedName>
        <fullName>UPF0324 membrane protein Atu0671</fullName>
    </recommendedName>
</protein>
<evidence type="ECO:0000255" key="1"/>
<evidence type="ECO:0000305" key="2"/>